<gene>
    <name evidence="1" type="primary">atpB</name>
    <name type="ordered locus">SPy_0755</name>
    <name type="ordered locus">M5005_Spy0576</name>
</gene>
<reference key="1">
    <citation type="journal article" date="2001" name="Proc. Natl. Acad. Sci. U.S.A.">
        <title>Complete genome sequence of an M1 strain of Streptococcus pyogenes.</title>
        <authorList>
            <person name="Ferretti J.J."/>
            <person name="McShan W.M."/>
            <person name="Ajdic D.J."/>
            <person name="Savic D.J."/>
            <person name="Savic G."/>
            <person name="Lyon K."/>
            <person name="Primeaux C."/>
            <person name="Sezate S."/>
            <person name="Suvorov A.N."/>
            <person name="Kenton S."/>
            <person name="Lai H.S."/>
            <person name="Lin S.P."/>
            <person name="Qian Y."/>
            <person name="Jia H.G."/>
            <person name="Najar F.Z."/>
            <person name="Ren Q."/>
            <person name="Zhu H."/>
            <person name="Song L."/>
            <person name="White J."/>
            <person name="Yuan X."/>
            <person name="Clifton S.W."/>
            <person name="Roe B.A."/>
            <person name="McLaughlin R.E."/>
        </authorList>
    </citation>
    <scope>NUCLEOTIDE SEQUENCE [LARGE SCALE GENOMIC DNA]</scope>
    <source>
        <strain>ATCC 700294 / SF370 / Serotype M1</strain>
    </source>
</reference>
<reference key="2">
    <citation type="journal article" date="2005" name="J. Infect. Dis.">
        <title>Evolutionary origin and emergence of a highly successful clone of serotype M1 group A Streptococcus involved multiple horizontal gene transfer events.</title>
        <authorList>
            <person name="Sumby P."/>
            <person name="Porcella S.F."/>
            <person name="Madrigal A.G."/>
            <person name="Barbian K.D."/>
            <person name="Virtaneva K."/>
            <person name="Ricklefs S.M."/>
            <person name="Sturdevant D.E."/>
            <person name="Graham M.R."/>
            <person name="Vuopio-Varkila J."/>
            <person name="Hoe N.P."/>
            <person name="Musser J.M."/>
        </authorList>
    </citation>
    <scope>NUCLEOTIDE SEQUENCE [LARGE SCALE GENOMIC DNA]</scope>
    <source>
        <strain>ATCC BAA-947 / MGAS5005 / Serotype M1</strain>
    </source>
</reference>
<accession>Q9A0J2</accession>
<accession>Q48ZM4</accession>
<organism>
    <name type="scientific">Streptococcus pyogenes serotype M1</name>
    <dbReference type="NCBI Taxonomy" id="301447"/>
    <lineage>
        <taxon>Bacteria</taxon>
        <taxon>Bacillati</taxon>
        <taxon>Bacillota</taxon>
        <taxon>Bacilli</taxon>
        <taxon>Lactobacillales</taxon>
        <taxon>Streptococcaceae</taxon>
        <taxon>Streptococcus</taxon>
    </lineage>
</organism>
<comment type="function">
    <text evidence="1">Key component of the proton channel; it plays a direct role in the translocation of protons across the membrane.</text>
</comment>
<comment type="subunit">
    <text evidence="1">F-type ATPases have 2 components, CF(1) - the catalytic core - and CF(0) - the membrane proton channel. CF(1) has five subunits: alpha(3), beta(3), gamma(1), delta(1), epsilon(1). CF(0) has three main subunits: a(1), b(2) and c(9-12). The alpha and beta chains form an alternating ring which encloses part of the gamma chain. CF(1) is attached to CF(0) by a central stalk formed by the gamma and epsilon chains, while a peripheral stalk is formed by the delta and b chains.</text>
</comment>
<comment type="subcellular location">
    <subcellularLocation>
        <location evidence="1">Cell membrane</location>
        <topology evidence="1">Multi-pass membrane protein</topology>
    </subcellularLocation>
</comment>
<comment type="similarity">
    <text evidence="1">Belongs to the ATPase A chain family.</text>
</comment>
<dbReference type="EMBL" id="AE004092">
    <property type="protein sequence ID" value="AAK33698.1"/>
    <property type="molecule type" value="Genomic_DNA"/>
</dbReference>
<dbReference type="EMBL" id="CP000017">
    <property type="protein sequence ID" value="AAZ51194.1"/>
    <property type="molecule type" value="Genomic_DNA"/>
</dbReference>
<dbReference type="RefSeq" id="NP_268977.1">
    <property type="nucleotide sequence ID" value="NC_002737.2"/>
</dbReference>
<dbReference type="SMR" id="Q9A0J2"/>
<dbReference type="PaxDb" id="1314-HKU360_00586"/>
<dbReference type="KEGG" id="spy:SPy_0755"/>
<dbReference type="KEGG" id="spz:M5005_Spy0576"/>
<dbReference type="PATRIC" id="fig|160490.10.peg.643"/>
<dbReference type="HOGENOM" id="CLU_041018_2_3_9"/>
<dbReference type="OMA" id="GFFWAAF"/>
<dbReference type="Proteomes" id="UP000000750">
    <property type="component" value="Chromosome"/>
</dbReference>
<dbReference type="GO" id="GO:0005886">
    <property type="term" value="C:plasma membrane"/>
    <property type="evidence" value="ECO:0007669"/>
    <property type="project" value="UniProtKB-SubCell"/>
</dbReference>
<dbReference type="GO" id="GO:0045259">
    <property type="term" value="C:proton-transporting ATP synthase complex"/>
    <property type="evidence" value="ECO:0007669"/>
    <property type="project" value="UniProtKB-KW"/>
</dbReference>
<dbReference type="GO" id="GO:0046933">
    <property type="term" value="F:proton-transporting ATP synthase activity, rotational mechanism"/>
    <property type="evidence" value="ECO:0007669"/>
    <property type="project" value="UniProtKB-UniRule"/>
</dbReference>
<dbReference type="GO" id="GO:0042777">
    <property type="term" value="P:proton motive force-driven plasma membrane ATP synthesis"/>
    <property type="evidence" value="ECO:0007669"/>
    <property type="project" value="TreeGrafter"/>
</dbReference>
<dbReference type="CDD" id="cd00310">
    <property type="entry name" value="ATP-synt_Fo_a_6"/>
    <property type="match status" value="1"/>
</dbReference>
<dbReference type="Gene3D" id="1.20.120.220">
    <property type="entry name" value="ATP synthase, F0 complex, subunit A"/>
    <property type="match status" value="1"/>
</dbReference>
<dbReference type="HAMAP" id="MF_01393">
    <property type="entry name" value="ATP_synth_a_bact"/>
    <property type="match status" value="1"/>
</dbReference>
<dbReference type="InterPro" id="IPR045082">
    <property type="entry name" value="ATP_syn_F0_a_bact/chloroplast"/>
</dbReference>
<dbReference type="InterPro" id="IPR000568">
    <property type="entry name" value="ATP_synth_F0_asu"/>
</dbReference>
<dbReference type="InterPro" id="IPR023011">
    <property type="entry name" value="ATP_synth_F0_asu_AS"/>
</dbReference>
<dbReference type="InterPro" id="IPR035908">
    <property type="entry name" value="F0_ATP_A_sf"/>
</dbReference>
<dbReference type="NCBIfam" id="TIGR01131">
    <property type="entry name" value="ATP_synt_6_or_A"/>
    <property type="match status" value="1"/>
</dbReference>
<dbReference type="NCBIfam" id="NF004479">
    <property type="entry name" value="PRK05815.1-4"/>
    <property type="match status" value="1"/>
</dbReference>
<dbReference type="PANTHER" id="PTHR42823">
    <property type="entry name" value="ATP SYNTHASE SUBUNIT A, CHLOROPLASTIC"/>
    <property type="match status" value="1"/>
</dbReference>
<dbReference type="PANTHER" id="PTHR42823:SF3">
    <property type="entry name" value="ATP SYNTHASE SUBUNIT A, CHLOROPLASTIC"/>
    <property type="match status" value="1"/>
</dbReference>
<dbReference type="Pfam" id="PF00119">
    <property type="entry name" value="ATP-synt_A"/>
    <property type="match status" value="1"/>
</dbReference>
<dbReference type="PRINTS" id="PR00123">
    <property type="entry name" value="ATPASEA"/>
</dbReference>
<dbReference type="SUPFAM" id="SSF81336">
    <property type="entry name" value="F1F0 ATP synthase subunit A"/>
    <property type="match status" value="1"/>
</dbReference>
<dbReference type="PROSITE" id="PS00449">
    <property type="entry name" value="ATPASE_A"/>
    <property type="match status" value="1"/>
</dbReference>
<feature type="chain" id="PRO_1000145324" description="ATP synthase subunit a">
    <location>
        <begin position="1"/>
        <end position="238"/>
    </location>
</feature>
<feature type="transmembrane region" description="Helical" evidence="1">
    <location>
        <begin position="18"/>
        <end position="38"/>
    </location>
</feature>
<feature type="transmembrane region" description="Helical" evidence="1">
    <location>
        <begin position="76"/>
        <end position="96"/>
    </location>
</feature>
<feature type="transmembrane region" description="Helical" evidence="1">
    <location>
        <begin position="114"/>
        <end position="134"/>
    </location>
</feature>
<feature type="transmembrane region" description="Helical" evidence="1">
    <location>
        <begin position="166"/>
        <end position="186"/>
    </location>
</feature>
<feature type="transmembrane region" description="Helical" evidence="1">
    <location>
        <begin position="193"/>
        <end position="213"/>
    </location>
</feature>
<keyword id="KW-0066">ATP synthesis</keyword>
<keyword id="KW-1003">Cell membrane</keyword>
<keyword id="KW-0138">CF(0)</keyword>
<keyword id="KW-0375">Hydrogen ion transport</keyword>
<keyword id="KW-0406">Ion transport</keyword>
<keyword id="KW-0472">Membrane</keyword>
<keyword id="KW-1185">Reference proteome</keyword>
<keyword id="KW-0812">Transmembrane</keyword>
<keyword id="KW-1133">Transmembrane helix</keyword>
<keyword id="KW-0813">Transport</keyword>
<sequence length="238" mass="26924">MEEAKIPMLKLGPITFNLTLLAVCIVTIAIVFAFVFWASRQMKLKPEGKQTALEYLISFVDGIGEEHLDHNLQKSYSLLLFTIFLFVAVANNLGLFTKLETVNGYNLWTSPTANLAFDLALSLFITLMVHIEGVRRRGLVAHLKRLATPWPMTPMNLLEEFTNFLSLAIRLFGNIFAGEVVTGLIVQLANYRVYWWPIAFLVNMAWTAFSVFISCIQAFVFTKLTATYLGKKVNESEE</sequence>
<name>ATP6_STRP1</name>
<proteinExistence type="inferred from homology"/>
<protein>
    <recommendedName>
        <fullName evidence="1">ATP synthase subunit a</fullName>
    </recommendedName>
    <alternativeName>
        <fullName evidence="1">ATP synthase F0 sector subunit a</fullName>
    </alternativeName>
    <alternativeName>
        <fullName evidence="1">F-ATPase subunit 6</fullName>
    </alternativeName>
</protein>
<evidence type="ECO:0000255" key="1">
    <source>
        <dbReference type="HAMAP-Rule" id="MF_01393"/>
    </source>
</evidence>